<protein>
    <recommendedName>
        <fullName evidence="1">Sugar fermentation stimulation protein homolog</fullName>
    </recommendedName>
</protein>
<accession>C3K238</accession>
<reference key="1">
    <citation type="journal article" date="2009" name="Genome Biol.">
        <title>Genomic and genetic analyses of diversity and plant interactions of Pseudomonas fluorescens.</title>
        <authorList>
            <person name="Silby M.W."/>
            <person name="Cerdeno-Tarraga A.M."/>
            <person name="Vernikos G.S."/>
            <person name="Giddens S.R."/>
            <person name="Jackson R.W."/>
            <person name="Preston G.M."/>
            <person name="Zhang X.-X."/>
            <person name="Moon C.D."/>
            <person name="Gehrig S.M."/>
            <person name="Godfrey S.A.C."/>
            <person name="Knight C.G."/>
            <person name="Malone J.G."/>
            <person name="Robinson Z."/>
            <person name="Spiers A.J."/>
            <person name="Harris S."/>
            <person name="Challis G.L."/>
            <person name="Yaxley A.M."/>
            <person name="Harris D."/>
            <person name="Seeger K."/>
            <person name="Murphy L."/>
            <person name="Rutter S."/>
            <person name="Squares R."/>
            <person name="Quail M.A."/>
            <person name="Saunders E."/>
            <person name="Mavromatis K."/>
            <person name="Brettin T.S."/>
            <person name="Bentley S.D."/>
            <person name="Hothersall J."/>
            <person name="Stephens E."/>
            <person name="Thomas C.M."/>
            <person name="Parkhill J."/>
            <person name="Levy S.B."/>
            <person name="Rainey P.B."/>
            <person name="Thomson N.R."/>
        </authorList>
    </citation>
    <scope>NUCLEOTIDE SEQUENCE [LARGE SCALE GENOMIC DNA]</scope>
    <source>
        <strain>SBW25</strain>
    </source>
</reference>
<gene>
    <name evidence="1" type="primary">sfsA</name>
    <name type="ordered locus">PFLU_5231</name>
</gene>
<sequence length="236" mass="25990">MRFNPPLEEARLIRRYKRFLTDIETVTGELLTIHCPNTGSMLNCMVEGGQVWFSRSNDPKRKLPGTWEIAETPQGRLACVNTARANQLVEEALLAGVITELNGFTALKREVPYGQEKSRIDFRLDYPDGAAYVEVKSVTLGFDGSAVAAFPDAVTQRGAKHLRELAHLARQGVRAVQLYCVNLSGIDAVRPAVEIDAAYAAALREAKSAGVEVLAYGVRVTSEEICVDRRLDVLLD</sequence>
<evidence type="ECO:0000255" key="1">
    <source>
        <dbReference type="HAMAP-Rule" id="MF_00095"/>
    </source>
</evidence>
<comment type="similarity">
    <text evidence="1">Belongs to the SfsA family.</text>
</comment>
<dbReference type="EMBL" id="AM181176">
    <property type="protein sequence ID" value="CAY52318.1"/>
    <property type="molecule type" value="Genomic_DNA"/>
</dbReference>
<dbReference type="RefSeq" id="WP_015885899.1">
    <property type="nucleotide sequence ID" value="NC_012660.1"/>
</dbReference>
<dbReference type="SMR" id="C3K238"/>
<dbReference type="STRING" id="294.SRM1_04848"/>
<dbReference type="PATRIC" id="fig|216595.4.peg.5363"/>
<dbReference type="eggNOG" id="COG1489">
    <property type="taxonomic scope" value="Bacteria"/>
</dbReference>
<dbReference type="HOGENOM" id="CLU_052299_2_0_6"/>
<dbReference type="OrthoDB" id="9802365at2"/>
<dbReference type="GO" id="GO:0003677">
    <property type="term" value="F:DNA binding"/>
    <property type="evidence" value="ECO:0007669"/>
    <property type="project" value="InterPro"/>
</dbReference>
<dbReference type="CDD" id="cd22359">
    <property type="entry name" value="SfsA-like_bacterial"/>
    <property type="match status" value="1"/>
</dbReference>
<dbReference type="FunFam" id="2.40.50.580:FF:000001">
    <property type="entry name" value="Sugar fermentation stimulation protein A"/>
    <property type="match status" value="1"/>
</dbReference>
<dbReference type="FunFam" id="3.40.1350.60:FF:000001">
    <property type="entry name" value="Sugar fermentation stimulation protein A"/>
    <property type="match status" value="1"/>
</dbReference>
<dbReference type="Gene3D" id="2.40.50.580">
    <property type="match status" value="1"/>
</dbReference>
<dbReference type="Gene3D" id="3.40.1350.60">
    <property type="match status" value="1"/>
</dbReference>
<dbReference type="HAMAP" id="MF_00095">
    <property type="entry name" value="SfsA"/>
    <property type="match status" value="1"/>
</dbReference>
<dbReference type="InterPro" id="IPR005224">
    <property type="entry name" value="SfsA"/>
</dbReference>
<dbReference type="InterPro" id="IPR040452">
    <property type="entry name" value="SfsA_C"/>
</dbReference>
<dbReference type="InterPro" id="IPR041465">
    <property type="entry name" value="SfsA_N"/>
</dbReference>
<dbReference type="NCBIfam" id="TIGR00230">
    <property type="entry name" value="sfsA"/>
    <property type="match status" value="1"/>
</dbReference>
<dbReference type="PANTHER" id="PTHR30545">
    <property type="entry name" value="SUGAR FERMENTATION STIMULATION PROTEIN A"/>
    <property type="match status" value="1"/>
</dbReference>
<dbReference type="PANTHER" id="PTHR30545:SF2">
    <property type="entry name" value="SUGAR FERMENTATION STIMULATION PROTEIN A"/>
    <property type="match status" value="1"/>
</dbReference>
<dbReference type="Pfam" id="PF03749">
    <property type="entry name" value="SfsA"/>
    <property type="match status" value="1"/>
</dbReference>
<dbReference type="Pfam" id="PF17746">
    <property type="entry name" value="SfsA_N"/>
    <property type="match status" value="1"/>
</dbReference>
<organism>
    <name type="scientific">Pseudomonas fluorescens (strain SBW25)</name>
    <dbReference type="NCBI Taxonomy" id="216595"/>
    <lineage>
        <taxon>Bacteria</taxon>
        <taxon>Pseudomonadati</taxon>
        <taxon>Pseudomonadota</taxon>
        <taxon>Gammaproteobacteria</taxon>
        <taxon>Pseudomonadales</taxon>
        <taxon>Pseudomonadaceae</taxon>
        <taxon>Pseudomonas</taxon>
    </lineage>
</organism>
<feature type="chain" id="PRO_1000202725" description="Sugar fermentation stimulation protein homolog">
    <location>
        <begin position="1"/>
        <end position="236"/>
    </location>
</feature>
<name>SFSA_PSEFS</name>
<proteinExistence type="inferred from homology"/>